<keyword id="KW-0119">Carbohydrate metabolism</keyword>
<keyword id="KW-0963">Cytoplasm</keyword>
<keyword id="KW-0413">Isomerase</keyword>
<keyword id="KW-0479">Metal-binding</keyword>
<keyword id="KW-0862">Zinc</keyword>
<accession>C1AJD9</accession>
<name>GMHA_MYCBT</name>
<gene>
    <name evidence="1" type="primary">gmhA</name>
    <name type="ordered locus">JTY_0117</name>
</gene>
<protein>
    <recommendedName>
        <fullName evidence="1">Phosphoheptose isomerase</fullName>
        <ecNumber evidence="1">5.3.1.28</ecNumber>
    </recommendedName>
    <alternativeName>
        <fullName evidence="1">Sedoheptulose 7-phosphate isomerase</fullName>
    </alternativeName>
</protein>
<proteinExistence type="inferred from homology"/>
<sequence>MCTARTAEEIFVETIAVKTRILNDRVLLEAARAIGDRLIAGYRAGARVFMCGNGGSAADAQHFAAELTGHLIFDRPPLGAEALHANSSHLTAVANDYDYDTVFARALEGSARPGDTLFAISTSGNSMSVLRAAKTARELGVTVVAMTGESGGQLAEFADFLINVPSRDTGRIQESHIVFIHAISEHVEHALFAPRQ</sequence>
<reference key="1">
    <citation type="journal article" date="2009" name="Vaccine">
        <title>Whole genome sequence analysis of Mycobacterium bovis bacillus Calmette-Guerin (BCG) Tokyo 172: a comparative study of BCG vaccine substrains.</title>
        <authorList>
            <person name="Seki M."/>
            <person name="Honda I."/>
            <person name="Fujita I."/>
            <person name="Yano I."/>
            <person name="Yamamoto S."/>
            <person name="Koyama A."/>
        </authorList>
    </citation>
    <scope>NUCLEOTIDE SEQUENCE [LARGE SCALE GENOMIC DNA]</scope>
    <source>
        <strain>BCG / Tokyo 172 / ATCC 35737 / TMC 1019</strain>
    </source>
</reference>
<organism>
    <name type="scientific">Mycobacterium bovis (strain BCG / Tokyo 172 / ATCC 35737 / TMC 1019)</name>
    <dbReference type="NCBI Taxonomy" id="561275"/>
    <lineage>
        <taxon>Bacteria</taxon>
        <taxon>Bacillati</taxon>
        <taxon>Actinomycetota</taxon>
        <taxon>Actinomycetes</taxon>
        <taxon>Mycobacteriales</taxon>
        <taxon>Mycobacteriaceae</taxon>
        <taxon>Mycobacterium</taxon>
        <taxon>Mycobacterium tuberculosis complex</taxon>
    </lineage>
</organism>
<comment type="function">
    <text evidence="1">Catalyzes the isomerization of sedoheptulose 7-phosphate in D-glycero-D-manno-heptose 7-phosphate.</text>
</comment>
<comment type="catalytic activity">
    <reaction evidence="1">
        <text>2 D-sedoheptulose 7-phosphate = D-glycero-alpha-D-manno-heptose 7-phosphate + D-glycero-beta-D-manno-heptose 7-phosphate</text>
        <dbReference type="Rhea" id="RHEA:27489"/>
        <dbReference type="ChEBI" id="CHEBI:57483"/>
        <dbReference type="ChEBI" id="CHEBI:60203"/>
        <dbReference type="ChEBI" id="CHEBI:60204"/>
        <dbReference type="EC" id="5.3.1.28"/>
    </reaction>
</comment>
<comment type="cofactor">
    <cofactor evidence="1">
        <name>Zn(2+)</name>
        <dbReference type="ChEBI" id="CHEBI:29105"/>
    </cofactor>
    <text evidence="1">Binds 1 zinc ion per subunit.</text>
</comment>
<comment type="pathway">
    <text evidence="1">Carbohydrate biosynthesis; D-glycero-D-manno-heptose 7-phosphate biosynthesis; D-glycero-alpha-D-manno-heptose 7-phosphate and D-glycero-beta-D-manno-heptose 7-phosphate from sedoheptulose 7-phosphate: step 1/1.</text>
</comment>
<comment type="subcellular location">
    <subcellularLocation>
        <location evidence="1">Cytoplasm</location>
    </subcellularLocation>
</comment>
<comment type="miscellaneous">
    <text evidence="1">The reaction produces a racemic mixture of D-glycero-alpha-D-manno-heptose 7-phosphate and D-glycero-beta-D-manno-heptose 7-phosphate.</text>
</comment>
<comment type="similarity">
    <text evidence="1">Belongs to the SIS family. GmhA subfamily.</text>
</comment>
<evidence type="ECO:0000255" key="1">
    <source>
        <dbReference type="HAMAP-Rule" id="MF_00067"/>
    </source>
</evidence>
<feature type="chain" id="PRO_1000197009" description="Phosphoheptose isomerase">
    <location>
        <begin position="1"/>
        <end position="196"/>
    </location>
</feature>
<feature type="domain" description="SIS" evidence="1">
    <location>
        <begin position="38"/>
        <end position="196"/>
    </location>
</feature>
<feature type="binding site" evidence="1">
    <location>
        <begin position="53"/>
        <end position="55"/>
    </location>
    <ligand>
        <name>substrate</name>
    </ligand>
</feature>
<feature type="binding site" evidence="1">
    <location>
        <position position="62"/>
    </location>
    <ligand>
        <name>Zn(2+)</name>
        <dbReference type="ChEBI" id="CHEBI:29105"/>
    </ligand>
</feature>
<feature type="binding site" evidence="1">
    <location>
        <position position="66"/>
    </location>
    <ligand>
        <name>substrate</name>
    </ligand>
</feature>
<feature type="binding site" evidence="1">
    <location>
        <position position="66"/>
    </location>
    <ligand>
        <name>Zn(2+)</name>
        <dbReference type="ChEBI" id="CHEBI:29105"/>
    </ligand>
</feature>
<feature type="binding site" evidence="1">
    <location>
        <begin position="95"/>
        <end position="96"/>
    </location>
    <ligand>
        <name>substrate</name>
    </ligand>
</feature>
<feature type="binding site" evidence="1">
    <location>
        <begin position="121"/>
        <end position="123"/>
    </location>
    <ligand>
        <name>substrate</name>
    </ligand>
</feature>
<feature type="binding site" evidence="1">
    <location>
        <position position="126"/>
    </location>
    <ligand>
        <name>substrate</name>
    </ligand>
</feature>
<feature type="binding site" evidence="1">
    <location>
        <position position="173"/>
    </location>
    <ligand>
        <name>substrate</name>
    </ligand>
</feature>
<feature type="binding site" evidence="1">
    <location>
        <position position="173"/>
    </location>
    <ligand>
        <name>Zn(2+)</name>
        <dbReference type="ChEBI" id="CHEBI:29105"/>
    </ligand>
</feature>
<feature type="binding site" evidence="1">
    <location>
        <position position="181"/>
    </location>
    <ligand>
        <name>Zn(2+)</name>
        <dbReference type="ChEBI" id="CHEBI:29105"/>
    </ligand>
</feature>
<dbReference type="EC" id="5.3.1.28" evidence="1"/>
<dbReference type="EMBL" id="AP010918">
    <property type="protein sequence ID" value="BAH24418.1"/>
    <property type="molecule type" value="Genomic_DNA"/>
</dbReference>
<dbReference type="RefSeq" id="WP_003400839.1">
    <property type="nucleotide sequence ID" value="NZ_CP014566.1"/>
</dbReference>
<dbReference type="SMR" id="C1AJD9"/>
<dbReference type="KEGG" id="mbt:JTY_0117"/>
<dbReference type="HOGENOM" id="CLU_080999_1_1_11"/>
<dbReference type="UniPathway" id="UPA00041">
    <property type="reaction ID" value="UER00436"/>
</dbReference>
<dbReference type="GO" id="GO:0005737">
    <property type="term" value="C:cytoplasm"/>
    <property type="evidence" value="ECO:0007669"/>
    <property type="project" value="UniProtKB-SubCell"/>
</dbReference>
<dbReference type="GO" id="GO:0097367">
    <property type="term" value="F:carbohydrate derivative binding"/>
    <property type="evidence" value="ECO:0007669"/>
    <property type="project" value="InterPro"/>
</dbReference>
<dbReference type="GO" id="GO:0008968">
    <property type="term" value="F:D-sedoheptulose 7-phosphate isomerase activity"/>
    <property type="evidence" value="ECO:0007669"/>
    <property type="project" value="UniProtKB-UniRule"/>
</dbReference>
<dbReference type="GO" id="GO:0008270">
    <property type="term" value="F:zinc ion binding"/>
    <property type="evidence" value="ECO:0007669"/>
    <property type="project" value="UniProtKB-UniRule"/>
</dbReference>
<dbReference type="GO" id="GO:0005975">
    <property type="term" value="P:carbohydrate metabolic process"/>
    <property type="evidence" value="ECO:0007669"/>
    <property type="project" value="UniProtKB-UniRule"/>
</dbReference>
<dbReference type="GO" id="GO:2001061">
    <property type="term" value="P:D-glycero-D-manno-heptose 7-phosphate biosynthetic process"/>
    <property type="evidence" value="ECO:0007669"/>
    <property type="project" value="UniProtKB-UniPathway"/>
</dbReference>
<dbReference type="CDD" id="cd05006">
    <property type="entry name" value="SIS_GmhA"/>
    <property type="match status" value="1"/>
</dbReference>
<dbReference type="Gene3D" id="3.40.50.10490">
    <property type="entry name" value="Glucose-6-phosphate isomerase like protein, domain 1"/>
    <property type="match status" value="1"/>
</dbReference>
<dbReference type="HAMAP" id="MF_00067">
    <property type="entry name" value="GmhA"/>
    <property type="match status" value="1"/>
</dbReference>
<dbReference type="InterPro" id="IPR035461">
    <property type="entry name" value="GmhA/DiaA"/>
</dbReference>
<dbReference type="InterPro" id="IPR004515">
    <property type="entry name" value="Phosphoheptose_Isoase"/>
</dbReference>
<dbReference type="InterPro" id="IPR001347">
    <property type="entry name" value="SIS_dom"/>
</dbReference>
<dbReference type="InterPro" id="IPR046348">
    <property type="entry name" value="SIS_dom_sf"/>
</dbReference>
<dbReference type="InterPro" id="IPR050099">
    <property type="entry name" value="SIS_GmhA/DiaA_subfam"/>
</dbReference>
<dbReference type="NCBIfam" id="NF010547">
    <property type="entry name" value="PRK13938.1"/>
    <property type="match status" value="1"/>
</dbReference>
<dbReference type="PANTHER" id="PTHR30390:SF6">
    <property type="entry name" value="DNAA INITIATOR-ASSOCIATING PROTEIN DIAA"/>
    <property type="match status" value="1"/>
</dbReference>
<dbReference type="PANTHER" id="PTHR30390">
    <property type="entry name" value="SEDOHEPTULOSE 7-PHOSPHATE ISOMERASE / DNAA INITIATOR-ASSOCIATING FACTOR FOR REPLICATION INITIATION"/>
    <property type="match status" value="1"/>
</dbReference>
<dbReference type="Pfam" id="PF13580">
    <property type="entry name" value="SIS_2"/>
    <property type="match status" value="1"/>
</dbReference>
<dbReference type="SUPFAM" id="SSF53697">
    <property type="entry name" value="SIS domain"/>
    <property type="match status" value="1"/>
</dbReference>
<dbReference type="PROSITE" id="PS51464">
    <property type="entry name" value="SIS"/>
    <property type="match status" value="1"/>
</dbReference>